<organism>
    <name type="scientific">Streptococcus pyogenes serotype M12 (strain MGAS2096)</name>
    <dbReference type="NCBI Taxonomy" id="370553"/>
    <lineage>
        <taxon>Bacteria</taxon>
        <taxon>Bacillati</taxon>
        <taxon>Bacillota</taxon>
        <taxon>Bacilli</taxon>
        <taxon>Lactobacillales</taxon>
        <taxon>Streptococcaceae</taxon>
        <taxon>Streptococcus</taxon>
    </lineage>
</organism>
<keyword id="KW-0131">Cell cycle</keyword>
<keyword id="KW-0132">Cell division</keyword>
<keyword id="KW-0133">Cell shape</keyword>
<keyword id="KW-0175">Coiled coil</keyword>
<keyword id="KW-0963">Cytoplasm</keyword>
<reference key="1">
    <citation type="journal article" date="2006" name="Proc. Natl. Acad. Sci. U.S.A.">
        <title>Molecular genetic anatomy of inter- and intraserotype variation in the human bacterial pathogen group A Streptococcus.</title>
        <authorList>
            <person name="Beres S.B."/>
            <person name="Richter E.W."/>
            <person name="Nagiec M.J."/>
            <person name="Sumby P."/>
            <person name="Porcella S.F."/>
            <person name="DeLeo F.R."/>
            <person name="Musser J.M."/>
        </authorList>
    </citation>
    <scope>NUCLEOTIDE SEQUENCE [LARGE SCALE GENOMIC DNA]</scope>
    <source>
        <strain>MGAS2096</strain>
    </source>
</reference>
<comment type="function">
    <text evidence="1">Divisome component that associates with the complex late in its assembly, after the Z-ring is formed, and is dependent on DivIC and PBP2B for its recruitment to the divisome. Together with EzrA, is a key component of the system that regulates PBP1 localization during cell cycle progression. Its main role could be the removal of PBP1 from the cell pole after pole maturation is completed. Also contributes to the recruitment of PBP1 to the division complex. Not essential for septum formation.</text>
</comment>
<comment type="subunit">
    <text evidence="1">Forms polymers through the coiled coil domains. Interacts with PBP1, MreC and EzrA.</text>
</comment>
<comment type="subcellular location">
    <subcellularLocation>
        <location evidence="1">Cytoplasm</location>
    </subcellularLocation>
    <text evidence="1">Shuttles between the lateral wall and the division site in a cell cycle-dependent manner.</text>
</comment>
<comment type="similarity">
    <text evidence="1">Belongs to the GpsB family.</text>
</comment>
<dbReference type="EMBL" id="CP000261">
    <property type="protein sequence ID" value="ABF36426.1"/>
    <property type="molecule type" value="Genomic_DNA"/>
</dbReference>
<dbReference type="SMR" id="Q1JAI2"/>
<dbReference type="KEGG" id="spj:MGAS2096_Spy1374"/>
<dbReference type="HOGENOM" id="CLU_140309_1_0_9"/>
<dbReference type="GO" id="GO:0005737">
    <property type="term" value="C:cytoplasm"/>
    <property type="evidence" value="ECO:0007669"/>
    <property type="project" value="UniProtKB-SubCell"/>
</dbReference>
<dbReference type="GO" id="GO:0051301">
    <property type="term" value="P:cell division"/>
    <property type="evidence" value="ECO:0007669"/>
    <property type="project" value="UniProtKB-UniRule"/>
</dbReference>
<dbReference type="GO" id="GO:0008360">
    <property type="term" value="P:regulation of cell shape"/>
    <property type="evidence" value="ECO:0007669"/>
    <property type="project" value="UniProtKB-UniRule"/>
</dbReference>
<dbReference type="Gene3D" id="6.10.250.660">
    <property type="match status" value="1"/>
</dbReference>
<dbReference type="HAMAP" id="MF_02011">
    <property type="entry name" value="GpsB"/>
    <property type="match status" value="1"/>
</dbReference>
<dbReference type="InterPro" id="IPR011229">
    <property type="entry name" value="Cell_cycle_GpsB"/>
</dbReference>
<dbReference type="InterPro" id="IPR019933">
    <property type="entry name" value="DivIVA_domain"/>
</dbReference>
<dbReference type="InterPro" id="IPR007793">
    <property type="entry name" value="DivIVA_fam"/>
</dbReference>
<dbReference type="NCBIfam" id="TIGR03544">
    <property type="entry name" value="DivI1A_domain"/>
    <property type="match status" value="1"/>
</dbReference>
<dbReference type="NCBIfam" id="NF010725">
    <property type="entry name" value="PRK14127.1"/>
    <property type="match status" value="1"/>
</dbReference>
<dbReference type="PANTHER" id="PTHR35794:SF1">
    <property type="entry name" value="CELL CYCLE PROTEIN GPSB"/>
    <property type="match status" value="1"/>
</dbReference>
<dbReference type="PANTHER" id="PTHR35794">
    <property type="entry name" value="CELL DIVISION PROTEIN DIVIVA"/>
    <property type="match status" value="1"/>
</dbReference>
<dbReference type="Pfam" id="PF05103">
    <property type="entry name" value="DivIVA"/>
    <property type="match status" value="1"/>
</dbReference>
<dbReference type="PIRSF" id="PIRSF029938">
    <property type="entry name" value="UCP029938"/>
    <property type="match status" value="1"/>
</dbReference>
<name>GPSB_STRPB</name>
<protein>
    <recommendedName>
        <fullName evidence="1">Cell cycle protein GpsB</fullName>
    </recommendedName>
    <alternativeName>
        <fullName evidence="1">Guiding PBP1-shuttling protein</fullName>
    </alternativeName>
</protein>
<feature type="chain" id="PRO_0000337957" description="Cell cycle protein GpsB">
    <location>
        <begin position="1"/>
        <end position="108"/>
    </location>
</feature>
<feature type="coiled-coil region" evidence="1">
    <location>
        <begin position="32"/>
        <end position="69"/>
    </location>
</feature>
<evidence type="ECO:0000255" key="1">
    <source>
        <dbReference type="HAMAP-Rule" id="MF_02011"/>
    </source>
</evidence>
<sequence length="108" mass="12445">MTSIIYSPKDIFEQEFKTSMRGFDKKEVDEFLDNVIKDYENFNAQIEALKAENEALKKAKFQARNTVSATVQQPVPQPTRVAQSATNFDILKRISKLEKEVFGKQIIE</sequence>
<gene>
    <name evidence="1" type="primary">gpsB</name>
    <name type="ordered locus">MGAS2096_Spy1374</name>
</gene>
<proteinExistence type="inferred from homology"/>
<accession>Q1JAI2</accession>